<organism>
    <name type="scientific">Variola virus (isolate Human/India/Ind3/1967)</name>
    <name type="common">VARV</name>
    <name type="synonym">Smallpox virus</name>
    <dbReference type="NCBI Taxonomy" id="587200"/>
    <lineage>
        <taxon>Viruses</taxon>
        <taxon>Varidnaviria</taxon>
        <taxon>Bamfordvirae</taxon>
        <taxon>Nucleocytoviricota</taxon>
        <taxon>Pokkesviricetes</taxon>
        <taxon>Chitovirales</taxon>
        <taxon>Poxviridae</taxon>
        <taxon>Chordopoxvirinae</taxon>
        <taxon>Orthopoxvirus</taxon>
        <taxon>Variola virus</taxon>
    </lineage>
</organism>
<reference key="1">
    <citation type="journal article" date="1991" name="Dokl. Akad. Nauk SSSR">
        <title>Creation of a clone library of fragments from the natural variola virus and study of the structural and functional organization of viral genes from a circle of hosts.</title>
        <authorList>
            <person name="Shchelkunov S.N."/>
            <person name="Marennikova S.S."/>
            <person name="Totmenin A.V."/>
            <person name="Blinov V.M."/>
            <person name="Chizhikov V.E."/>
            <person name="Gutorov V.V."/>
            <person name="Safronov P.F."/>
            <person name="Pozdnyakov S.G."/>
            <person name="Shelukhina E.M."/>
            <person name="Gashnikov P.V."/>
            <person name="Anjaparidze O.G."/>
            <person name="Sandakhchiev L.S."/>
        </authorList>
    </citation>
    <scope>NUCLEOTIDE SEQUENCE [GENOMIC DNA]</scope>
</reference>
<reference key="2">
    <citation type="journal article" date="1993" name="FEBS Lett.">
        <title>Genes of variola and vaccinia viruses necessary to overcome the host protective mechanisms.</title>
        <authorList>
            <person name="Shchelkunov S.N."/>
            <person name="Blinov V.M."/>
            <person name="Sandakhchiev L.S."/>
        </authorList>
    </citation>
    <scope>NUCLEOTIDE SEQUENCE [GENOMIC DNA]</scope>
</reference>
<comment type="function">
    <text evidence="1">Contributes to virulence by binding to the host IKBKB subunit of the IKK complex and preventing host NF-kappa-B activation in response to pro-inflammatory stimuli such as TNF-alpha or IL1B. Mechanistically, sterically hinders the direct contact between the kinase domains of IKBKB in the IKK complex containing IKBKB, CHUK/IKKA and NEMO.</text>
</comment>
<comment type="subunit">
    <text evidence="1">Homodimers. Interacts with host IKBKB; this interaction inhibits host NF-kappa-B activation.</text>
</comment>
<comment type="similarity">
    <text evidence="2">Belongs to the orthopoxvirus OPG200 family.</text>
</comment>
<sequence>MTANFSTHVFSPQHCGCDRLTSIDDVRQCLTEYIYWSSYAYRNRQCAGQLYSTLLSFRDDAESVFIDVRELVKNMPWDDVKDCVEIIRCYIPDEQKTIREISAIIGLCAYAATYWGGEDHPTSNSLNALFVMLKMLNYVDYNIIFRRMN</sequence>
<dbReference type="EMBL" id="X69198">
    <property type="protein sequence ID" value="CAA49123.1"/>
    <property type="molecule type" value="Genomic_DNA"/>
</dbReference>
<dbReference type="EMBL" id="X67117">
    <property type="protein sequence ID" value="CAA47524.1"/>
    <property type="molecule type" value="Genomic_DNA"/>
</dbReference>
<dbReference type="PIR" id="E36856">
    <property type="entry name" value="E36856"/>
</dbReference>
<dbReference type="RefSeq" id="NP_042226.1">
    <property type="nucleotide sequence ID" value="NC_001611.1"/>
</dbReference>
<dbReference type="SMR" id="P0DSV9"/>
<dbReference type="GeneID" id="1486544"/>
<dbReference type="KEGG" id="vg:1486544"/>
<dbReference type="Proteomes" id="UP000002060">
    <property type="component" value="Segment"/>
</dbReference>
<dbReference type="GO" id="GO:0085034">
    <property type="term" value="P:symbiont-mediated suppression of host NF-kappaB cascade"/>
    <property type="evidence" value="ECO:0007669"/>
    <property type="project" value="UniProtKB-KW"/>
</dbReference>
<dbReference type="Gene3D" id="1.10.437.20">
    <property type="entry name" value="dsDNA poxvirus"/>
    <property type="match status" value="1"/>
</dbReference>
<dbReference type="InterPro" id="IPR011212">
    <property type="entry name" value="Poxvirus_B14/B22/C16"/>
</dbReference>
<dbReference type="InterPro" id="IPR022819">
    <property type="entry name" value="Poxvirus_Bcl-2-like"/>
</dbReference>
<dbReference type="InterPro" id="IPR043018">
    <property type="entry name" value="Poxvirus_sf"/>
</dbReference>
<dbReference type="Pfam" id="PF06227">
    <property type="entry name" value="Poxv_Bcl-2-like"/>
    <property type="match status" value="1"/>
</dbReference>
<dbReference type="PIRSF" id="PIRSF017324">
    <property type="entry name" value="UCP017324"/>
    <property type="match status" value="1"/>
</dbReference>
<evidence type="ECO:0000250" key="1">
    <source>
        <dbReference type="UniProtKB" id="P24772"/>
    </source>
</evidence>
<evidence type="ECO:0000305" key="2"/>
<proteinExistence type="inferred from homology"/>
<protein>
    <recommendedName>
        <fullName>Protein OPG200</fullName>
    </recommendedName>
</protein>
<accession>P0DSV9</accession>
<accession>P33877</accession>
<keyword id="KW-0244">Early protein</keyword>
<keyword id="KW-0945">Host-virus interaction</keyword>
<keyword id="KW-1100">Inhibition of host NF-kappa-B by virus</keyword>
<keyword id="KW-1185">Reference proteome</keyword>
<name>PG200_VAR67</name>
<feature type="chain" id="PRO_0000099366" description="Protein OPG200">
    <location>
        <begin position="1"/>
        <end position="149"/>
    </location>
</feature>
<organismHost>
    <name type="scientific">Homo sapiens</name>
    <name type="common">Human</name>
    <dbReference type="NCBI Taxonomy" id="9606"/>
</organismHost>
<gene>
    <name type="primary">OPG200</name>
    <name type="ORF">B13R</name>
    <name type="ORF">B14R</name>
    <name type="ORF">B15R</name>
</gene>